<comment type="function">
    <text evidence="1">Binds to the 23S rRNA.</text>
</comment>
<comment type="subunit">
    <text evidence="1">Part of the 50S ribosomal subunit.</text>
</comment>
<comment type="similarity">
    <text evidence="1">Belongs to the universal ribosomal protein uL15 family.</text>
</comment>
<gene>
    <name evidence="1" type="primary">rplO</name>
    <name type="ordered locus">VF_0256</name>
</gene>
<keyword id="KW-1185">Reference proteome</keyword>
<keyword id="KW-0687">Ribonucleoprotein</keyword>
<keyword id="KW-0689">Ribosomal protein</keyword>
<keyword id="KW-0694">RNA-binding</keyword>
<keyword id="KW-0699">rRNA-binding</keyword>
<proteinExistence type="inferred from homology"/>
<accession>Q5E895</accession>
<reference key="1">
    <citation type="journal article" date="2005" name="Proc. Natl. Acad. Sci. U.S.A.">
        <title>Complete genome sequence of Vibrio fischeri: a symbiotic bacterium with pathogenic congeners.</title>
        <authorList>
            <person name="Ruby E.G."/>
            <person name="Urbanowski M."/>
            <person name="Campbell J."/>
            <person name="Dunn A."/>
            <person name="Faini M."/>
            <person name="Gunsalus R."/>
            <person name="Lostroh P."/>
            <person name="Lupp C."/>
            <person name="McCann J."/>
            <person name="Millikan D."/>
            <person name="Schaefer A."/>
            <person name="Stabb E."/>
            <person name="Stevens A."/>
            <person name="Visick K."/>
            <person name="Whistler C."/>
            <person name="Greenberg E.P."/>
        </authorList>
    </citation>
    <scope>NUCLEOTIDE SEQUENCE [LARGE SCALE GENOMIC DNA]</scope>
    <source>
        <strain>ATCC 700601 / ES114</strain>
    </source>
</reference>
<reference key="2">
    <citation type="journal article" date="2008" name="BMC Genomics">
        <title>Comparative genomics-based investigation of resequencing targets in Vibrio fischeri: focus on point miscalls and artefactual expansions.</title>
        <authorList>
            <person name="Mandel M.J."/>
            <person name="Stabb E.V."/>
            <person name="Ruby E.G."/>
        </authorList>
    </citation>
    <scope>SEQUENCE REVISION</scope>
</reference>
<feature type="chain" id="PRO_1000142899" description="Large ribosomal subunit protein uL15">
    <location>
        <begin position="1"/>
        <end position="144"/>
    </location>
</feature>
<feature type="region of interest" description="Disordered" evidence="2">
    <location>
        <begin position="1"/>
        <end position="52"/>
    </location>
</feature>
<feature type="compositionally biased region" description="Gly residues" evidence="2">
    <location>
        <begin position="21"/>
        <end position="31"/>
    </location>
</feature>
<feature type="compositionally biased region" description="Basic residues" evidence="2">
    <location>
        <begin position="32"/>
        <end position="44"/>
    </location>
</feature>
<evidence type="ECO:0000255" key="1">
    <source>
        <dbReference type="HAMAP-Rule" id="MF_01341"/>
    </source>
</evidence>
<evidence type="ECO:0000256" key="2">
    <source>
        <dbReference type="SAM" id="MobiDB-lite"/>
    </source>
</evidence>
<evidence type="ECO:0000305" key="3"/>
<protein>
    <recommendedName>
        <fullName evidence="1">Large ribosomal subunit protein uL15</fullName>
    </recommendedName>
    <alternativeName>
        <fullName evidence="3">50S ribosomal protein L15</fullName>
    </alternativeName>
</protein>
<dbReference type="EMBL" id="CP000020">
    <property type="protein sequence ID" value="AAW84751.2"/>
    <property type="molecule type" value="Genomic_DNA"/>
</dbReference>
<dbReference type="RefSeq" id="WP_005417259.1">
    <property type="nucleotide sequence ID" value="NZ_CAWLES010000001.1"/>
</dbReference>
<dbReference type="RefSeq" id="YP_203639.2">
    <property type="nucleotide sequence ID" value="NC_006840.2"/>
</dbReference>
<dbReference type="SMR" id="Q5E895"/>
<dbReference type="STRING" id="312309.VF_0256"/>
<dbReference type="EnsemblBacteria" id="AAW84751">
    <property type="protein sequence ID" value="AAW84751"/>
    <property type="gene ID" value="VF_0256"/>
</dbReference>
<dbReference type="GeneID" id="54162877"/>
<dbReference type="KEGG" id="vfi:VF_0256"/>
<dbReference type="PATRIC" id="fig|312309.11.peg.251"/>
<dbReference type="eggNOG" id="COG0200">
    <property type="taxonomic scope" value="Bacteria"/>
</dbReference>
<dbReference type="HOGENOM" id="CLU_055188_4_2_6"/>
<dbReference type="OrthoDB" id="9810293at2"/>
<dbReference type="Proteomes" id="UP000000537">
    <property type="component" value="Chromosome I"/>
</dbReference>
<dbReference type="GO" id="GO:0022625">
    <property type="term" value="C:cytosolic large ribosomal subunit"/>
    <property type="evidence" value="ECO:0007669"/>
    <property type="project" value="TreeGrafter"/>
</dbReference>
<dbReference type="GO" id="GO:0019843">
    <property type="term" value="F:rRNA binding"/>
    <property type="evidence" value="ECO:0007669"/>
    <property type="project" value="UniProtKB-UniRule"/>
</dbReference>
<dbReference type="GO" id="GO:0003735">
    <property type="term" value="F:structural constituent of ribosome"/>
    <property type="evidence" value="ECO:0007669"/>
    <property type="project" value="InterPro"/>
</dbReference>
<dbReference type="GO" id="GO:0006412">
    <property type="term" value="P:translation"/>
    <property type="evidence" value="ECO:0007669"/>
    <property type="project" value="UniProtKB-UniRule"/>
</dbReference>
<dbReference type="FunFam" id="3.100.10.10:FF:000003">
    <property type="entry name" value="50S ribosomal protein L15"/>
    <property type="match status" value="1"/>
</dbReference>
<dbReference type="Gene3D" id="3.100.10.10">
    <property type="match status" value="1"/>
</dbReference>
<dbReference type="HAMAP" id="MF_01341">
    <property type="entry name" value="Ribosomal_uL15"/>
    <property type="match status" value="1"/>
</dbReference>
<dbReference type="InterPro" id="IPR030878">
    <property type="entry name" value="Ribosomal_uL15"/>
</dbReference>
<dbReference type="InterPro" id="IPR021131">
    <property type="entry name" value="Ribosomal_uL15/eL18"/>
</dbReference>
<dbReference type="InterPro" id="IPR036227">
    <property type="entry name" value="Ribosomal_uL15/eL18_sf"/>
</dbReference>
<dbReference type="InterPro" id="IPR005749">
    <property type="entry name" value="Ribosomal_uL15_bac-type"/>
</dbReference>
<dbReference type="InterPro" id="IPR001196">
    <property type="entry name" value="Ribosomal_uL15_CS"/>
</dbReference>
<dbReference type="NCBIfam" id="TIGR01071">
    <property type="entry name" value="rplO_bact"/>
    <property type="match status" value="1"/>
</dbReference>
<dbReference type="PANTHER" id="PTHR12934">
    <property type="entry name" value="50S RIBOSOMAL PROTEIN L15"/>
    <property type="match status" value="1"/>
</dbReference>
<dbReference type="PANTHER" id="PTHR12934:SF11">
    <property type="entry name" value="LARGE RIBOSOMAL SUBUNIT PROTEIN UL15M"/>
    <property type="match status" value="1"/>
</dbReference>
<dbReference type="Pfam" id="PF00828">
    <property type="entry name" value="Ribosomal_L27A"/>
    <property type="match status" value="1"/>
</dbReference>
<dbReference type="SUPFAM" id="SSF52080">
    <property type="entry name" value="Ribosomal proteins L15p and L18e"/>
    <property type="match status" value="1"/>
</dbReference>
<dbReference type="PROSITE" id="PS00475">
    <property type="entry name" value="RIBOSOMAL_L15"/>
    <property type="match status" value="1"/>
</dbReference>
<organism>
    <name type="scientific">Aliivibrio fischeri (strain ATCC 700601 / ES114)</name>
    <name type="common">Vibrio fischeri</name>
    <dbReference type="NCBI Taxonomy" id="312309"/>
    <lineage>
        <taxon>Bacteria</taxon>
        <taxon>Pseudomonadati</taxon>
        <taxon>Pseudomonadota</taxon>
        <taxon>Gammaproteobacteria</taxon>
        <taxon>Vibrionales</taxon>
        <taxon>Vibrionaceae</taxon>
        <taxon>Aliivibrio</taxon>
    </lineage>
</organism>
<sequence length="144" mass="14923">MRLNTLSPAAGSKPSKKRVGRGIGSGLGKTGGRGHKGQKSRSGGKVRAGFEGGQMPLKQRLPKFGFTSRKSLVTAEVRLSELAKVEGNVIDLNSLKAANVITKNIEFAKVVLSGEIATAVTVKGLRVTKGAKAAIEAAGGKIEE</sequence>
<name>RL15_ALIF1</name>